<gene>
    <name evidence="1 6" type="primary">mshmt</name>
</gene>
<reference key="1">
    <citation type="journal article" date="2008" name="Biosci. Biotechnol. Biochem.">
        <title>Cloning of the gene encoding alpha-methylserine hydroxymethyltransferase from Aminobacter sp. AJ110403 and Ensifer sp. AJ110404 and characterization of the recombinant enzyme.</title>
        <authorList>
            <person name="Nozaki H."/>
            <person name="Kuroda S."/>
            <person name="Watanabe K."/>
            <person name="Yokozeki K."/>
        </authorList>
    </citation>
    <scope>NUCLEOTIDE SEQUENCE [GENOMIC DNA]</scope>
    <scope>FUNCTION</scope>
    <scope>CATALYTIC ACTIVITY</scope>
    <scope>COFACTOR</scope>
    <scope>BIOPHYSICOCHEMICAL PROPERTIES</scope>
    <scope>SUBUNIT</scope>
    <source>
        <strain>AJ110404</strain>
    </source>
</reference>
<proteinExistence type="evidence at protein level"/>
<name>MSHMT_ENSSX</name>
<evidence type="ECO:0000255" key="1">
    <source>
        <dbReference type="HAMAP-Rule" id="MF_00051"/>
    </source>
</evidence>
<evidence type="ECO:0000269" key="2">
    <source>
    </source>
</evidence>
<evidence type="ECO:0000303" key="3">
    <source>
    </source>
</evidence>
<evidence type="ECO:0000305" key="4"/>
<evidence type="ECO:0000305" key="5">
    <source>
    </source>
</evidence>
<evidence type="ECO:0000312" key="6">
    <source>
        <dbReference type="EMBL" id="BAG31004.1"/>
    </source>
</evidence>
<accession>B2DEV1</accession>
<dbReference type="EC" id="2.1.2.7" evidence="1 2"/>
<dbReference type="EMBL" id="AB426470">
    <property type="protein sequence ID" value="BAG31004.1"/>
    <property type="molecule type" value="Genomic_DNA"/>
</dbReference>
<dbReference type="SMR" id="B2DEV1"/>
<dbReference type="BRENDA" id="2.1.2.7">
    <property type="organism ID" value="11478"/>
</dbReference>
<dbReference type="UniPathway" id="UPA00193"/>
<dbReference type="GO" id="GO:0005829">
    <property type="term" value="C:cytosol"/>
    <property type="evidence" value="ECO:0007669"/>
    <property type="project" value="TreeGrafter"/>
</dbReference>
<dbReference type="GO" id="GO:0050413">
    <property type="term" value="F:D-alanine 2-hydroxymethyltransferase activity"/>
    <property type="evidence" value="ECO:0007669"/>
    <property type="project" value="RHEA"/>
</dbReference>
<dbReference type="GO" id="GO:0004372">
    <property type="term" value="F:glycine hydroxymethyltransferase activity"/>
    <property type="evidence" value="ECO:0007669"/>
    <property type="project" value="UniProtKB-EC"/>
</dbReference>
<dbReference type="GO" id="GO:0030170">
    <property type="term" value="F:pyridoxal phosphate binding"/>
    <property type="evidence" value="ECO:0007669"/>
    <property type="project" value="UniProtKB-UniRule"/>
</dbReference>
<dbReference type="GO" id="GO:0019264">
    <property type="term" value="P:glycine biosynthetic process from serine"/>
    <property type="evidence" value="ECO:0007669"/>
    <property type="project" value="InterPro"/>
</dbReference>
<dbReference type="GO" id="GO:0035999">
    <property type="term" value="P:tetrahydrofolate interconversion"/>
    <property type="evidence" value="ECO:0007669"/>
    <property type="project" value="UniProtKB-UniRule"/>
</dbReference>
<dbReference type="CDD" id="cd00378">
    <property type="entry name" value="SHMT"/>
    <property type="match status" value="1"/>
</dbReference>
<dbReference type="FunFam" id="3.40.640.10:FF:000001">
    <property type="entry name" value="Serine hydroxymethyltransferase"/>
    <property type="match status" value="1"/>
</dbReference>
<dbReference type="Gene3D" id="3.90.1150.10">
    <property type="entry name" value="Aspartate Aminotransferase, domain 1"/>
    <property type="match status" value="1"/>
</dbReference>
<dbReference type="Gene3D" id="3.40.640.10">
    <property type="entry name" value="Type I PLP-dependent aspartate aminotransferase-like (Major domain)"/>
    <property type="match status" value="1"/>
</dbReference>
<dbReference type="HAMAP" id="MF_00051">
    <property type="entry name" value="SHMT"/>
    <property type="match status" value="1"/>
</dbReference>
<dbReference type="InterPro" id="IPR015424">
    <property type="entry name" value="PyrdxlP-dep_Trfase"/>
</dbReference>
<dbReference type="InterPro" id="IPR015421">
    <property type="entry name" value="PyrdxlP-dep_Trfase_major"/>
</dbReference>
<dbReference type="InterPro" id="IPR015422">
    <property type="entry name" value="PyrdxlP-dep_Trfase_small"/>
</dbReference>
<dbReference type="InterPro" id="IPR001085">
    <property type="entry name" value="Ser_HO-MeTrfase"/>
</dbReference>
<dbReference type="InterPro" id="IPR049943">
    <property type="entry name" value="Ser_HO-MeTrfase-like"/>
</dbReference>
<dbReference type="InterPro" id="IPR039429">
    <property type="entry name" value="SHMT-like_dom"/>
</dbReference>
<dbReference type="NCBIfam" id="NF000586">
    <property type="entry name" value="PRK00011.1"/>
    <property type="match status" value="1"/>
</dbReference>
<dbReference type="PANTHER" id="PTHR11680">
    <property type="entry name" value="SERINE HYDROXYMETHYLTRANSFERASE"/>
    <property type="match status" value="1"/>
</dbReference>
<dbReference type="PANTHER" id="PTHR11680:SF35">
    <property type="entry name" value="SERINE HYDROXYMETHYLTRANSFERASE 1"/>
    <property type="match status" value="1"/>
</dbReference>
<dbReference type="Pfam" id="PF00464">
    <property type="entry name" value="SHMT"/>
    <property type="match status" value="1"/>
</dbReference>
<dbReference type="PIRSF" id="PIRSF000412">
    <property type="entry name" value="SHMT"/>
    <property type="match status" value="1"/>
</dbReference>
<dbReference type="SUPFAM" id="SSF53383">
    <property type="entry name" value="PLP-dependent transferases"/>
    <property type="match status" value="1"/>
</dbReference>
<sequence length="425" mass="45600">MDHATRAHFTMTVGEVDPLLADALASERGRQQNQIELIASENIVSRAVLDALGHEITNKTLEGYPGNRFHGGGQFVDIAEQAAIDRAKQLFNCGYANVQPHSGTQANLAVFFLLLKPGEKVLSLDLAAGGHLSHGMKANLSGRWFDATNYNVNPQNEVIDLDEMERLAEEIRPKLLITGGSAYPRELDFERMSRIAKKVGAYFLVDMAHIAGLVAGGVHPSPFPHADIVTCTTTKTLRGPRGGLILTNNEEWYKKLQAAVFPGVQGSLHSNVLAAKAICLGEAMLDDFKVYARQVVANAKVLANTLAERGVRIVSGGTDTHIVLLDLASKGLLGKQAETLLAKANITSNKNPIPGDSPRPPEWVGMRLGSSAATTRGLKEAEFRVLGTVIADLIDAEVAGKADDVVEGAKAKIAELTNTFPVYGQ</sequence>
<organism>
    <name type="scientific">Ensifer sp</name>
    <dbReference type="NCBI Taxonomy" id="1872086"/>
    <lineage>
        <taxon>Bacteria</taxon>
        <taxon>Pseudomonadati</taxon>
        <taxon>Pseudomonadota</taxon>
        <taxon>Alphaproteobacteria</taxon>
        <taxon>Hyphomicrobiales</taxon>
        <taxon>Rhizobiaceae</taxon>
        <taxon>Sinorhizobium/Ensifer group</taxon>
        <taxon>Ensifer</taxon>
    </lineage>
</organism>
<feature type="chain" id="PRO_0000455996" description="2-methylserine hydroxymethyltransferase">
    <location>
        <begin position="1"/>
        <end position="425"/>
    </location>
</feature>
<feature type="binding site" evidence="1">
    <location>
        <position position="126"/>
    </location>
    <ligand>
        <name>(6S)-5,6,7,8-tetrahydrofolate</name>
        <dbReference type="ChEBI" id="CHEBI:57453"/>
    </ligand>
</feature>
<feature type="binding site" evidence="1">
    <location>
        <begin position="130"/>
        <end position="132"/>
    </location>
    <ligand>
        <name>(6S)-5,6,7,8-tetrahydrofolate</name>
        <dbReference type="ChEBI" id="CHEBI:57453"/>
    </ligand>
</feature>
<feature type="binding site" evidence="1">
    <location>
        <position position="251"/>
    </location>
    <ligand>
        <name>(6S)-5,6,7,8-tetrahydrofolate</name>
        <dbReference type="ChEBI" id="CHEBI:57453"/>
    </ligand>
</feature>
<feature type="site" description="Plays an important role in substrate specificity" evidence="1 5">
    <location>
        <position position="234"/>
    </location>
</feature>
<feature type="modified residue" description="N6-(pyridoxal phosphate)lysine" evidence="1">
    <location>
        <position position="235"/>
    </location>
</feature>
<comment type="function">
    <text evidence="2">Catalyzes the reversible interconversion of alpha-methyl-L-serine to D-alanine with tetrahydrofolate (THF) serving as the one-carbon carrier. Cannot use alpha-methyl-D-serine, L-serine, D-serine or L-alanine.</text>
</comment>
<comment type="catalytic activity">
    <reaction evidence="1 2">
        <text>(6R)-5,10-methylene-5,6,7,8-tetrahydrofolate + D-alanine + H2O = 2-methylserine + (6S)-5,6,7,8-tetrahydrofolate</text>
        <dbReference type="Rhea" id="RHEA:10064"/>
        <dbReference type="ChEBI" id="CHEBI:15377"/>
        <dbReference type="ChEBI" id="CHEBI:15636"/>
        <dbReference type="ChEBI" id="CHEBI:57416"/>
        <dbReference type="ChEBI" id="CHEBI:57453"/>
        <dbReference type="ChEBI" id="CHEBI:58275"/>
        <dbReference type="EC" id="2.1.2.7"/>
    </reaction>
</comment>
<comment type="cofactor">
    <cofactor evidence="1 2">
        <name>pyridoxal 5'-phosphate</name>
        <dbReference type="ChEBI" id="CHEBI:597326"/>
    </cofactor>
</comment>
<comment type="biophysicochemical properties">
    <kinetics>
        <KM evidence="2">1880 uM for alpha-methyl-L-serine</KM>
        <KM evidence="2">228 uM for tetrahydrofolate</KM>
        <Vmax evidence="2">15.4 umol/min/mg enzyme with alpha-methyl-L-serine as substrate</Vmax>
        <Vmax evidence="2">5.48 umol/min/mg enzyme with D-alanine as substrate</Vmax>
    </kinetics>
</comment>
<comment type="pathway">
    <text evidence="1">One-carbon metabolism; tetrahydrofolate interconversion.</text>
</comment>
<comment type="subunit">
    <text evidence="1 2">Homodimer.</text>
</comment>
<comment type="subcellular location">
    <subcellularLocation>
        <location evidence="1">Cytoplasm</location>
    </subcellularLocation>
</comment>
<comment type="similarity">
    <text evidence="1">Belongs to the SHMT family.</text>
</comment>
<keyword id="KW-0963">Cytoplasm</keyword>
<keyword id="KW-0554">One-carbon metabolism</keyword>
<keyword id="KW-0663">Pyridoxal phosphate</keyword>
<keyword id="KW-0808">Transferase</keyword>
<protein>
    <recommendedName>
        <fullName evidence="1 4">2-methylserine hydroxymethyltransferase</fullName>
        <shortName evidence="1 3">MSHMT</shortName>
        <ecNumber evidence="1 2">2.1.2.7</ecNumber>
    </recommendedName>
    <alternativeName>
        <fullName evidence="1 3">Alpha-methylserine hydroxymethyltransferase</fullName>
    </alternativeName>
    <alternativeName>
        <fullName evidence="1 4">D-alanine 2-hydroxymethyltransferase</fullName>
    </alternativeName>
    <alternativeName>
        <fullName evidence="3">EHMT</fullName>
    </alternativeName>
</protein>